<comment type="function">
    <text evidence="3 4">Cytochrome P450 monooxygenase; part of the gene cluster that mediates the biosynthesis of pseurotin A, a competitive inhibitor of chitin synthase and an inducer of nerve-cell proliferation (PubMed:24082142, PubMed:24939566). The PKS-NRPS hybrid synthetase psoA is responsible for the biosynthesis of azaspirene, one of the first intermediates having the 1-oxa-7-azaspiro[4,4]-non-2-ene-4,6-dione core of pseurotin, via condensation of one acetyl-CoA, 4 malonyl-CoA, and a L-phenylalanine molecule (PubMed:24082142, PubMed:24939566). The dual-functional monooxygenase/methyltransferase psoF seems to be involved in the addition of the C3 methyl group onto the pseurotin scaffold (PubMed:24939566). Azaspirene is then converted to synerazol through 4 steps including oxidation of C17 by the cytochrome P450 monooxygenase psoD, O-methylation of the hydroxy group of C8 by the methyltransferase psoC, and the trans-to-cis isomerization of the C13 olefin by the glutathione S-transferase psoE (PubMed:24939566). The fourth step of synerazol production is performed by the dual-functional monooxygenase/methyltransferase psoF which seems to catalyze the epoxidation of the intermediate deepoxy-synerazol (PubMed:24939566). Synerazol can be attacked by a water molecule nonenzymatically at two different positions to yield two diol products, pseurotin A and pseurotin D (PubMed:24939566).</text>
</comment>
<comment type="cofactor">
    <cofactor evidence="1">
        <name>heme</name>
        <dbReference type="ChEBI" id="CHEBI:30413"/>
    </cofactor>
</comment>
<comment type="pathway">
    <text evidence="3 4">Secondary metabolite biosynthesis.</text>
</comment>
<comment type="induction">
    <text evidence="2">Expression is induced under hypoxic conditions (PubMed:21388144).</text>
</comment>
<comment type="disruption phenotype">
    <text evidence="3 4">Abolishes the production of pseurotin (PubMed:24082142, PubMed:24939566).</text>
</comment>
<comment type="similarity">
    <text evidence="6">Belongs to the cytochrome P450 family.</text>
</comment>
<accession>Q4WB01</accession>
<name>PSOD_ASPFU</name>
<sequence length="518" mass="59818">MIISSYHLLAPRCRRDQKVYNKSIHVLNTVAKGIKGWPFLGSAPALAAVDTNGIIGIFKSWAEQYGSITQFSAMGDKQVILTEDKDARELFVRRGIKYSDRGAPHAVEYISMKQNPGFRPKDDGWRRQRSMIQSAINITSINKYQSLMDDEATFTVNALLQSPDSFHGEFLRYSYSVLTSSLLGFSVRSPSDPFIHHNETFTAELMNSFRPDCFPSNVFPVLRKLPMWLLPSLRTMERLRKEYVGEMWAFRRKIEKLVKEGSATECIYKHFLLHRDQYNVTEEESVHTFQAMIDGGTRSPHNNLLTFLFLMMEFPEWQKKLQEEVDRVVGRDRMPSYRDIPNLPTVRAIVKETVRYRSIVAEMGIGHCLQTDDIYKGYFFEKGTVFNAIFASILMDKDTYPDGKLFNPARWLEPSYPTYKEPLTTYPNCQGFPAFGYGRRACPGVDFAERTLVIMFAKLGWTMNIRWPRDEDGNELREELQYEPVPAPRPLKFGCRLEARDADRAKIVEEAAKHLKLQ</sequence>
<organism>
    <name type="scientific">Aspergillus fumigatus (strain ATCC MYA-4609 / CBS 101355 / FGSC A1100 / Af293)</name>
    <name type="common">Neosartorya fumigata</name>
    <dbReference type="NCBI Taxonomy" id="330879"/>
    <lineage>
        <taxon>Eukaryota</taxon>
        <taxon>Fungi</taxon>
        <taxon>Dikarya</taxon>
        <taxon>Ascomycota</taxon>
        <taxon>Pezizomycotina</taxon>
        <taxon>Eurotiomycetes</taxon>
        <taxon>Eurotiomycetidae</taxon>
        <taxon>Eurotiales</taxon>
        <taxon>Aspergillaceae</taxon>
        <taxon>Aspergillus</taxon>
        <taxon>Aspergillus subgen. Fumigati</taxon>
    </lineage>
</organism>
<feature type="chain" id="PRO_0000438198" description="Cytochrome P450 monooxygenase psoD">
    <location>
        <begin position="1"/>
        <end position="518"/>
    </location>
</feature>
<feature type="binding site" description="axial binding residue" evidence="1">
    <location>
        <position position="442"/>
    </location>
    <ligand>
        <name>heme</name>
        <dbReference type="ChEBI" id="CHEBI:30413"/>
    </ligand>
    <ligandPart>
        <name>Fe</name>
        <dbReference type="ChEBI" id="CHEBI:18248"/>
    </ligandPart>
</feature>
<reference key="1">
    <citation type="journal article" date="2005" name="Nature">
        <title>Genomic sequence of the pathogenic and allergenic filamentous fungus Aspergillus fumigatus.</title>
        <authorList>
            <person name="Nierman W.C."/>
            <person name="Pain A."/>
            <person name="Anderson M.J."/>
            <person name="Wortman J.R."/>
            <person name="Kim H.S."/>
            <person name="Arroyo J."/>
            <person name="Berriman M."/>
            <person name="Abe K."/>
            <person name="Archer D.B."/>
            <person name="Bermejo C."/>
            <person name="Bennett J.W."/>
            <person name="Bowyer P."/>
            <person name="Chen D."/>
            <person name="Collins M."/>
            <person name="Coulsen R."/>
            <person name="Davies R."/>
            <person name="Dyer P.S."/>
            <person name="Farman M.L."/>
            <person name="Fedorova N."/>
            <person name="Fedorova N.D."/>
            <person name="Feldblyum T.V."/>
            <person name="Fischer R."/>
            <person name="Fosker N."/>
            <person name="Fraser A."/>
            <person name="Garcia J.L."/>
            <person name="Garcia M.J."/>
            <person name="Goble A."/>
            <person name="Goldman G.H."/>
            <person name="Gomi K."/>
            <person name="Griffith-Jones S."/>
            <person name="Gwilliam R."/>
            <person name="Haas B.J."/>
            <person name="Haas H."/>
            <person name="Harris D.E."/>
            <person name="Horiuchi H."/>
            <person name="Huang J."/>
            <person name="Humphray S."/>
            <person name="Jimenez J."/>
            <person name="Keller N."/>
            <person name="Khouri H."/>
            <person name="Kitamoto K."/>
            <person name="Kobayashi T."/>
            <person name="Konzack S."/>
            <person name="Kulkarni R."/>
            <person name="Kumagai T."/>
            <person name="Lafton A."/>
            <person name="Latge J.-P."/>
            <person name="Li W."/>
            <person name="Lord A."/>
            <person name="Lu C."/>
            <person name="Majoros W.H."/>
            <person name="May G.S."/>
            <person name="Miller B.L."/>
            <person name="Mohamoud Y."/>
            <person name="Molina M."/>
            <person name="Monod M."/>
            <person name="Mouyna I."/>
            <person name="Mulligan S."/>
            <person name="Murphy L.D."/>
            <person name="O'Neil S."/>
            <person name="Paulsen I."/>
            <person name="Penalva M.A."/>
            <person name="Pertea M."/>
            <person name="Price C."/>
            <person name="Pritchard B.L."/>
            <person name="Quail M.A."/>
            <person name="Rabbinowitsch E."/>
            <person name="Rawlins N."/>
            <person name="Rajandream M.A."/>
            <person name="Reichard U."/>
            <person name="Renauld H."/>
            <person name="Robson G.D."/>
            <person name="Rodriguez de Cordoba S."/>
            <person name="Rodriguez-Pena J.M."/>
            <person name="Ronning C.M."/>
            <person name="Rutter S."/>
            <person name="Salzberg S.L."/>
            <person name="Sanchez M."/>
            <person name="Sanchez-Ferrero J.C."/>
            <person name="Saunders D."/>
            <person name="Seeger K."/>
            <person name="Squares R."/>
            <person name="Squares S."/>
            <person name="Takeuchi M."/>
            <person name="Tekaia F."/>
            <person name="Turner G."/>
            <person name="Vazquez de Aldana C.R."/>
            <person name="Weidman J."/>
            <person name="White O."/>
            <person name="Woodward J.R."/>
            <person name="Yu J.-H."/>
            <person name="Fraser C.M."/>
            <person name="Galagan J.E."/>
            <person name="Asai K."/>
            <person name="Machida M."/>
            <person name="Hall N."/>
            <person name="Barrell B.G."/>
            <person name="Denning D.W."/>
        </authorList>
    </citation>
    <scope>NUCLEOTIDE SEQUENCE [LARGE SCALE GENOMIC DNA]</scope>
    <source>
        <strain>ATCC MYA-4609 / CBS 101355 / FGSC A1100 / Af293</strain>
    </source>
</reference>
<reference key="2">
    <citation type="journal article" date="2011" name="J. Proteome Res.">
        <title>Analysis of the Aspergillus fumigatus proteome reveals metabolic changes and the activation of the pseurotin A biosynthesis gene cluster in response to hypoxia.</title>
        <authorList>
            <person name="Voedisch M."/>
            <person name="Scherlach K."/>
            <person name="Winkler R."/>
            <person name="Hertweck C."/>
            <person name="Braun H.P."/>
            <person name="Roth M."/>
            <person name="Haas H."/>
            <person name="Werner E.R."/>
            <person name="Brakhage A.A."/>
            <person name="Kniemeyer O."/>
        </authorList>
    </citation>
    <scope>INDUCTION</scope>
</reference>
<reference key="3">
    <citation type="journal article" date="2013" name="Proc. Natl. Acad. Sci. U.S.A.">
        <title>Prototype of an intertwined secondary-metabolite supercluster.</title>
        <authorList>
            <person name="Wiemann P."/>
            <person name="Guo C.J."/>
            <person name="Palmer J.M."/>
            <person name="Sekonyela R."/>
            <person name="Wang C.C."/>
            <person name="Keller N.P."/>
        </authorList>
    </citation>
    <scope>FUNCTION</scope>
    <scope>DISRUPTION PHENOTYPE</scope>
</reference>
<reference key="4">
    <citation type="journal article" date="2014" name="Angew. Chem. Int. Ed.">
        <title>Elucidation of pseurotin biosynthetic pathway points to trans-acting C-methyltransferase: generation of chemical diversity.</title>
        <authorList>
            <person name="Tsunematsu Y."/>
            <person name="Fukutomi M."/>
            <person name="Saruwatari T."/>
            <person name="Noguchi H."/>
            <person name="Hotta K."/>
            <person name="Tang Y."/>
            <person name="Watanabe K."/>
        </authorList>
    </citation>
    <scope>FUNCTION</scope>
    <scope>DISRUPTION PHENOTYPE</scope>
    <scope>CATALYTIC ACTIVITY</scope>
</reference>
<evidence type="ECO:0000250" key="1">
    <source>
        <dbReference type="UniProtKB" id="P04798"/>
    </source>
</evidence>
<evidence type="ECO:0000269" key="2">
    <source>
    </source>
</evidence>
<evidence type="ECO:0000269" key="3">
    <source>
    </source>
</evidence>
<evidence type="ECO:0000269" key="4">
    <source>
    </source>
</evidence>
<evidence type="ECO:0000303" key="5">
    <source>
    </source>
</evidence>
<evidence type="ECO:0000305" key="6"/>
<dbReference type="EC" id="1.-.-.-" evidence="4"/>
<dbReference type="EMBL" id="AAHF01000014">
    <property type="protein sequence ID" value="EAL85111.2"/>
    <property type="molecule type" value="Genomic_DNA"/>
</dbReference>
<dbReference type="RefSeq" id="XP_747149.2">
    <property type="nucleotide sequence ID" value="XM_742056.2"/>
</dbReference>
<dbReference type="SMR" id="Q4WB01"/>
<dbReference type="STRING" id="330879.Q4WB01"/>
<dbReference type="EnsemblFungi" id="EAL85111">
    <property type="protein sequence ID" value="EAL85111"/>
    <property type="gene ID" value="AFUA_8G00560"/>
</dbReference>
<dbReference type="GeneID" id="3504508"/>
<dbReference type="KEGG" id="afm:AFUA_8G00560"/>
<dbReference type="eggNOG" id="KOG0156">
    <property type="taxonomic scope" value="Eukaryota"/>
</dbReference>
<dbReference type="HOGENOM" id="CLU_001570_2_1_1"/>
<dbReference type="InParanoid" id="Q4WB01"/>
<dbReference type="OMA" id="NIFTWDQ"/>
<dbReference type="OrthoDB" id="1103324at2759"/>
<dbReference type="Proteomes" id="UP000002530">
    <property type="component" value="Chromosome 8"/>
</dbReference>
<dbReference type="GO" id="GO:0020037">
    <property type="term" value="F:heme binding"/>
    <property type="evidence" value="ECO:0007669"/>
    <property type="project" value="InterPro"/>
</dbReference>
<dbReference type="GO" id="GO:0005506">
    <property type="term" value="F:iron ion binding"/>
    <property type="evidence" value="ECO:0007669"/>
    <property type="project" value="InterPro"/>
</dbReference>
<dbReference type="GO" id="GO:0004497">
    <property type="term" value="F:monooxygenase activity"/>
    <property type="evidence" value="ECO:0007669"/>
    <property type="project" value="UniProtKB-KW"/>
</dbReference>
<dbReference type="GO" id="GO:0016705">
    <property type="term" value="F:oxidoreductase activity, acting on paired donors, with incorporation or reduction of molecular oxygen"/>
    <property type="evidence" value="ECO:0007669"/>
    <property type="project" value="InterPro"/>
</dbReference>
<dbReference type="GO" id="GO:0044283">
    <property type="term" value="P:small molecule biosynthetic process"/>
    <property type="evidence" value="ECO:0007669"/>
    <property type="project" value="UniProtKB-ARBA"/>
</dbReference>
<dbReference type="CDD" id="cd11065">
    <property type="entry name" value="CYP64-like"/>
    <property type="match status" value="1"/>
</dbReference>
<dbReference type="Gene3D" id="1.10.630.10">
    <property type="entry name" value="Cytochrome P450"/>
    <property type="match status" value="1"/>
</dbReference>
<dbReference type="InterPro" id="IPR001128">
    <property type="entry name" value="Cyt_P450"/>
</dbReference>
<dbReference type="InterPro" id="IPR017972">
    <property type="entry name" value="Cyt_P450_CS"/>
</dbReference>
<dbReference type="InterPro" id="IPR002401">
    <property type="entry name" value="Cyt_P450_E_grp-I"/>
</dbReference>
<dbReference type="InterPro" id="IPR036396">
    <property type="entry name" value="Cyt_P450_sf"/>
</dbReference>
<dbReference type="InterPro" id="IPR050364">
    <property type="entry name" value="Cytochrome_P450_fung"/>
</dbReference>
<dbReference type="PANTHER" id="PTHR46300:SF2">
    <property type="entry name" value="CYTOCHROME P450 MONOOXYGENASE ALNH-RELATED"/>
    <property type="match status" value="1"/>
</dbReference>
<dbReference type="PANTHER" id="PTHR46300">
    <property type="entry name" value="P450, PUTATIVE (EUROFUNG)-RELATED-RELATED"/>
    <property type="match status" value="1"/>
</dbReference>
<dbReference type="Pfam" id="PF00067">
    <property type="entry name" value="p450"/>
    <property type="match status" value="1"/>
</dbReference>
<dbReference type="PRINTS" id="PR00463">
    <property type="entry name" value="EP450I"/>
</dbReference>
<dbReference type="PRINTS" id="PR00385">
    <property type="entry name" value="P450"/>
</dbReference>
<dbReference type="SUPFAM" id="SSF48264">
    <property type="entry name" value="Cytochrome P450"/>
    <property type="match status" value="1"/>
</dbReference>
<dbReference type="PROSITE" id="PS00086">
    <property type="entry name" value="CYTOCHROME_P450"/>
    <property type="match status" value="1"/>
</dbReference>
<keyword id="KW-0349">Heme</keyword>
<keyword id="KW-0408">Iron</keyword>
<keyword id="KW-0479">Metal-binding</keyword>
<keyword id="KW-0503">Monooxygenase</keyword>
<keyword id="KW-0560">Oxidoreductase</keyword>
<keyword id="KW-1185">Reference proteome</keyword>
<protein>
    <recommendedName>
        <fullName evidence="5">Cytochrome P450 monooxygenase psoD</fullName>
        <ecNumber evidence="4">1.-.-.-</ecNumber>
    </recommendedName>
    <alternativeName>
        <fullName evidence="5">Pseurotin biosynthesis protein D</fullName>
    </alternativeName>
</protein>
<gene>
    <name evidence="5" type="primary">psoD</name>
    <name type="ORF">AFUA_8G00560</name>
</gene>
<proteinExistence type="evidence at protein level"/>